<proteinExistence type="inferred from homology"/>
<protein>
    <recommendedName>
        <fullName evidence="1">Peptidyl-tRNA hydrolase</fullName>
        <shortName evidence="1">Pth</shortName>
        <ecNumber evidence="1">3.1.1.29</ecNumber>
    </recommendedName>
</protein>
<dbReference type="EC" id="3.1.1.29" evidence="1"/>
<dbReference type="EMBL" id="BA000016">
    <property type="protein sequence ID" value="BAB82191.1"/>
    <property type="molecule type" value="Genomic_DNA"/>
</dbReference>
<dbReference type="RefSeq" id="WP_003450588.1">
    <property type="nucleotide sequence ID" value="NC_003366.1"/>
</dbReference>
<dbReference type="SMR" id="Q8XHJ8"/>
<dbReference type="STRING" id="195102.gene:10491819"/>
<dbReference type="GeneID" id="93000911"/>
<dbReference type="KEGG" id="cpe:CPE2485"/>
<dbReference type="HOGENOM" id="CLU_062456_4_1_9"/>
<dbReference type="Proteomes" id="UP000000818">
    <property type="component" value="Chromosome"/>
</dbReference>
<dbReference type="GO" id="GO:0005737">
    <property type="term" value="C:cytoplasm"/>
    <property type="evidence" value="ECO:0007669"/>
    <property type="project" value="UniProtKB-SubCell"/>
</dbReference>
<dbReference type="GO" id="GO:0004045">
    <property type="term" value="F:peptidyl-tRNA hydrolase activity"/>
    <property type="evidence" value="ECO:0007669"/>
    <property type="project" value="UniProtKB-UniRule"/>
</dbReference>
<dbReference type="GO" id="GO:0000049">
    <property type="term" value="F:tRNA binding"/>
    <property type="evidence" value="ECO:0007669"/>
    <property type="project" value="UniProtKB-UniRule"/>
</dbReference>
<dbReference type="GO" id="GO:0006515">
    <property type="term" value="P:protein quality control for misfolded or incompletely synthesized proteins"/>
    <property type="evidence" value="ECO:0007669"/>
    <property type="project" value="UniProtKB-UniRule"/>
</dbReference>
<dbReference type="GO" id="GO:0072344">
    <property type="term" value="P:rescue of stalled ribosome"/>
    <property type="evidence" value="ECO:0007669"/>
    <property type="project" value="UniProtKB-UniRule"/>
</dbReference>
<dbReference type="CDD" id="cd00462">
    <property type="entry name" value="PTH"/>
    <property type="match status" value="1"/>
</dbReference>
<dbReference type="FunFam" id="3.40.50.1470:FF:000001">
    <property type="entry name" value="Peptidyl-tRNA hydrolase"/>
    <property type="match status" value="1"/>
</dbReference>
<dbReference type="Gene3D" id="3.40.50.1470">
    <property type="entry name" value="Peptidyl-tRNA hydrolase"/>
    <property type="match status" value="1"/>
</dbReference>
<dbReference type="HAMAP" id="MF_00083">
    <property type="entry name" value="Pept_tRNA_hydro_bact"/>
    <property type="match status" value="1"/>
</dbReference>
<dbReference type="InterPro" id="IPR001328">
    <property type="entry name" value="Pept_tRNA_hydro"/>
</dbReference>
<dbReference type="InterPro" id="IPR018171">
    <property type="entry name" value="Pept_tRNA_hydro_CS"/>
</dbReference>
<dbReference type="InterPro" id="IPR036416">
    <property type="entry name" value="Pept_tRNA_hydro_sf"/>
</dbReference>
<dbReference type="NCBIfam" id="TIGR00447">
    <property type="entry name" value="pth"/>
    <property type="match status" value="1"/>
</dbReference>
<dbReference type="PANTHER" id="PTHR17224">
    <property type="entry name" value="PEPTIDYL-TRNA HYDROLASE"/>
    <property type="match status" value="1"/>
</dbReference>
<dbReference type="PANTHER" id="PTHR17224:SF1">
    <property type="entry name" value="PEPTIDYL-TRNA HYDROLASE"/>
    <property type="match status" value="1"/>
</dbReference>
<dbReference type="Pfam" id="PF01195">
    <property type="entry name" value="Pept_tRNA_hydro"/>
    <property type="match status" value="1"/>
</dbReference>
<dbReference type="SUPFAM" id="SSF53178">
    <property type="entry name" value="Peptidyl-tRNA hydrolase-like"/>
    <property type="match status" value="1"/>
</dbReference>
<dbReference type="PROSITE" id="PS01195">
    <property type="entry name" value="PEPT_TRNA_HYDROL_1"/>
    <property type="match status" value="1"/>
</dbReference>
<dbReference type="PROSITE" id="PS01196">
    <property type="entry name" value="PEPT_TRNA_HYDROL_2"/>
    <property type="match status" value="1"/>
</dbReference>
<comment type="function">
    <text evidence="1">Hydrolyzes ribosome-free peptidyl-tRNAs (with 1 or more amino acids incorporated), which drop off the ribosome during protein synthesis, or as a result of ribosome stalling.</text>
</comment>
<comment type="function">
    <text evidence="1">Catalyzes the release of premature peptidyl moieties from peptidyl-tRNA molecules trapped in stalled 50S ribosomal subunits, and thus maintains levels of free tRNAs and 50S ribosomes.</text>
</comment>
<comment type="catalytic activity">
    <reaction evidence="1">
        <text>an N-acyl-L-alpha-aminoacyl-tRNA + H2O = an N-acyl-L-amino acid + a tRNA + H(+)</text>
        <dbReference type="Rhea" id="RHEA:54448"/>
        <dbReference type="Rhea" id="RHEA-COMP:10123"/>
        <dbReference type="Rhea" id="RHEA-COMP:13883"/>
        <dbReference type="ChEBI" id="CHEBI:15377"/>
        <dbReference type="ChEBI" id="CHEBI:15378"/>
        <dbReference type="ChEBI" id="CHEBI:59874"/>
        <dbReference type="ChEBI" id="CHEBI:78442"/>
        <dbReference type="ChEBI" id="CHEBI:138191"/>
        <dbReference type="EC" id="3.1.1.29"/>
    </reaction>
</comment>
<comment type="subunit">
    <text evidence="1">Monomer.</text>
</comment>
<comment type="subcellular location">
    <subcellularLocation>
        <location evidence="1">Cytoplasm</location>
    </subcellularLocation>
</comment>
<comment type="similarity">
    <text evidence="1">Belongs to the PTH family.</text>
</comment>
<organism>
    <name type="scientific">Clostridium perfringens (strain 13 / Type A)</name>
    <dbReference type="NCBI Taxonomy" id="195102"/>
    <lineage>
        <taxon>Bacteria</taxon>
        <taxon>Bacillati</taxon>
        <taxon>Bacillota</taxon>
        <taxon>Clostridia</taxon>
        <taxon>Eubacteriales</taxon>
        <taxon>Clostridiaceae</taxon>
        <taxon>Clostridium</taxon>
    </lineage>
</organism>
<evidence type="ECO:0000255" key="1">
    <source>
        <dbReference type="HAMAP-Rule" id="MF_00083"/>
    </source>
</evidence>
<feature type="chain" id="PRO_0000187723" description="Peptidyl-tRNA hydrolase">
    <location>
        <begin position="1"/>
        <end position="188"/>
    </location>
</feature>
<feature type="active site" description="Proton acceptor" evidence="1">
    <location>
        <position position="19"/>
    </location>
</feature>
<feature type="binding site" evidence="1">
    <location>
        <position position="14"/>
    </location>
    <ligand>
        <name>tRNA</name>
        <dbReference type="ChEBI" id="CHEBI:17843"/>
    </ligand>
</feature>
<feature type="binding site" evidence="1">
    <location>
        <position position="64"/>
    </location>
    <ligand>
        <name>tRNA</name>
        <dbReference type="ChEBI" id="CHEBI:17843"/>
    </ligand>
</feature>
<feature type="binding site" evidence="1">
    <location>
        <position position="66"/>
    </location>
    <ligand>
        <name>tRNA</name>
        <dbReference type="ChEBI" id="CHEBI:17843"/>
    </ligand>
</feature>
<feature type="binding site" evidence="1">
    <location>
        <position position="112"/>
    </location>
    <ligand>
        <name>tRNA</name>
        <dbReference type="ChEBI" id="CHEBI:17843"/>
    </ligand>
</feature>
<feature type="site" description="Discriminates between blocked and unblocked aminoacyl-tRNA" evidence="1">
    <location>
        <position position="9"/>
    </location>
</feature>
<feature type="site" description="Stabilizes the basic form of H active site to accept a proton" evidence="1">
    <location>
        <position position="91"/>
    </location>
</feature>
<accession>Q8XHJ8</accession>
<keyword id="KW-0963">Cytoplasm</keyword>
<keyword id="KW-0378">Hydrolase</keyword>
<keyword id="KW-1185">Reference proteome</keyword>
<keyword id="KW-0694">RNA-binding</keyword>
<keyword id="KW-0820">tRNA-binding</keyword>
<name>PTH_CLOPE</name>
<reference key="1">
    <citation type="journal article" date="2002" name="Proc. Natl. Acad. Sci. U.S.A.">
        <title>Complete genome sequence of Clostridium perfringens, an anaerobic flesh-eater.</title>
        <authorList>
            <person name="Shimizu T."/>
            <person name="Ohtani K."/>
            <person name="Hirakawa H."/>
            <person name="Ohshima K."/>
            <person name="Yamashita A."/>
            <person name="Shiba T."/>
            <person name="Ogasawara N."/>
            <person name="Hattori M."/>
            <person name="Kuhara S."/>
            <person name="Hayashi H."/>
        </authorList>
    </citation>
    <scope>NUCLEOTIDE SEQUENCE [LARGE SCALE GENOMIC DNA]</scope>
    <source>
        <strain>13 / Type A</strain>
    </source>
</reference>
<gene>
    <name evidence="1" type="primary">pth</name>
    <name type="synonym">spoVC</name>
    <name type="ordered locus">CPE2485</name>
</gene>
<sequence>MILIVGLGNPGKQYEQTRHNIGFDVIDYMANKYNIDVNREKFKGICGEGFIENKKVILLKPLTYMNLSGESIRELANFYKLEDDEIIVVYDDISLDIGRLRIREKGSAGGHNGIKSIIQNLGGDKFPRVKVGVGQPKDNLVNHVLGKFSKEDREHIEKVIPVVSDAIVEIVKNDAKESMNKFNGVNIE</sequence>